<sequence length="433" mass="46350">MVISPSLSALHTLAHNARQAALHLGSLNTAERNQAIAAIADGLTAAMPEILAANQEDCAAAEAMGIAKPLYNRLLLGESKLKSTIAGVKDVEHLPDPLGQVTLHRQLDEGLVLKRVGCPLGVLGVIFEARPEALIQISSLAIKSGNAVILKGGREATRSCQVLTEVIQTALAKTVVSPEAINLLTTREEIRELLGLNQYVDLIIPRGSNEFVQYIQQNTQIPVLGHADGICHLYLDAQADLSKAIPITVDAKTQYPAACNAIETLLVHQAIAAEFLPPLAQALGEKGVSLRGDSGTQKLIDCEPATEADWCTEYSDLILSIKIVDSLEAAIDHINQYGSKHTDGIISEDLTAAEQFCQRVDSAGVYHNCSTRFADGFRYGFGAEVGISTQKMPPRGPVGLEGLVTYKYQLWGHGHIAATYTGQGAKAFTHLDL</sequence>
<evidence type="ECO:0000255" key="1">
    <source>
        <dbReference type="HAMAP-Rule" id="MF_00412"/>
    </source>
</evidence>
<gene>
    <name evidence="1" type="primary">proA1</name>
    <name type="synonym">proA</name>
    <name type="ordered locus">sll0373</name>
</gene>
<reference key="1">
    <citation type="journal article" date="1995" name="DNA Res.">
        <title>Sequence analysis of the genome of the unicellular cyanobacterium Synechocystis sp. strain PCC6803. I. Sequence features in the 1 Mb region from map positions 64% to 92% of the genome.</title>
        <authorList>
            <person name="Kaneko T."/>
            <person name="Tanaka A."/>
            <person name="Sato S."/>
            <person name="Kotani H."/>
            <person name="Sazuka T."/>
            <person name="Miyajima N."/>
            <person name="Sugiura M."/>
            <person name="Tabata S."/>
        </authorList>
    </citation>
    <scope>NUCLEOTIDE SEQUENCE [LARGE SCALE GENOMIC DNA]</scope>
    <source>
        <strain>ATCC 27184 / PCC 6803 / N-1</strain>
    </source>
</reference>
<reference key="2">
    <citation type="journal article" date="1996" name="DNA Res.">
        <title>Sequence analysis of the genome of the unicellular cyanobacterium Synechocystis sp. strain PCC6803. II. Sequence determination of the entire genome and assignment of potential protein-coding regions.</title>
        <authorList>
            <person name="Kaneko T."/>
            <person name="Sato S."/>
            <person name="Kotani H."/>
            <person name="Tanaka A."/>
            <person name="Asamizu E."/>
            <person name="Nakamura Y."/>
            <person name="Miyajima N."/>
            <person name="Hirosawa M."/>
            <person name="Sugiura M."/>
            <person name="Sasamoto S."/>
            <person name="Kimura T."/>
            <person name="Hosouchi T."/>
            <person name="Matsuno A."/>
            <person name="Muraki A."/>
            <person name="Nakazaki N."/>
            <person name="Naruo K."/>
            <person name="Okumura S."/>
            <person name="Shimpo S."/>
            <person name="Takeuchi C."/>
            <person name="Wada T."/>
            <person name="Watanabe A."/>
            <person name="Yamada M."/>
            <person name="Yasuda M."/>
            <person name="Tabata S."/>
        </authorList>
    </citation>
    <scope>NUCLEOTIDE SEQUENCE [LARGE SCALE GENOMIC DNA]</scope>
    <source>
        <strain>ATCC 27184 / PCC 6803 / Kazusa</strain>
    </source>
</reference>
<keyword id="KW-0028">Amino-acid biosynthesis</keyword>
<keyword id="KW-0963">Cytoplasm</keyword>
<keyword id="KW-0521">NADP</keyword>
<keyword id="KW-0560">Oxidoreductase</keyword>
<keyword id="KW-0641">Proline biosynthesis</keyword>
<keyword id="KW-1185">Reference proteome</keyword>
<organism>
    <name type="scientific">Synechocystis sp. (strain ATCC 27184 / PCC 6803 / Kazusa)</name>
    <dbReference type="NCBI Taxonomy" id="1111708"/>
    <lineage>
        <taxon>Bacteria</taxon>
        <taxon>Bacillati</taxon>
        <taxon>Cyanobacteriota</taxon>
        <taxon>Cyanophyceae</taxon>
        <taxon>Synechococcales</taxon>
        <taxon>Merismopediaceae</taxon>
        <taxon>Synechocystis</taxon>
    </lineage>
</organism>
<name>PROA1_SYNY3</name>
<proteinExistence type="inferred from homology"/>
<dbReference type="EC" id="1.2.1.41" evidence="1"/>
<dbReference type="EMBL" id="BA000022">
    <property type="protein sequence ID" value="BAA10399.1"/>
    <property type="molecule type" value="Genomic_DNA"/>
</dbReference>
<dbReference type="PIR" id="S76553">
    <property type="entry name" value="S76553"/>
</dbReference>
<dbReference type="SMR" id="P54902"/>
<dbReference type="FunCoup" id="P54902">
    <property type="interactions" value="347"/>
</dbReference>
<dbReference type="STRING" id="1148.gene:10499900"/>
<dbReference type="PaxDb" id="1148-1001665"/>
<dbReference type="EnsemblBacteria" id="BAA10399">
    <property type="protein sequence ID" value="BAA10399"/>
    <property type="gene ID" value="BAA10399"/>
</dbReference>
<dbReference type="KEGG" id="syn:sll0373"/>
<dbReference type="eggNOG" id="COG0014">
    <property type="taxonomic scope" value="Bacteria"/>
</dbReference>
<dbReference type="InParanoid" id="P54902"/>
<dbReference type="PhylomeDB" id="P54902"/>
<dbReference type="UniPathway" id="UPA00098">
    <property type="reaction ID" value="UER00360"/>
</dbReference>
<dbReference type="Proteomes" id="UP000001425">
    <property type="component" value="Chromosome"/>
</dbReference>
<dbReference type="GO" id="GO:0005737">
    <property type="term" value="C:cytoplasm"/>
    <property type="evidence" value="ECO:0007669"/>
    <property type="project" value="UniProtKB-SubCell"/>
</dbReference>
<dbReference type="GO" id="GO:0004350">
    <property type="term" value="F:glutamate-5-semialdehyde dehydrogenase activity"/>
    <property type="evidence" value="ECO:0000318"/>
    <property type="project" value="GO_Central"/>
</dbReference>
<dbReference type="GO" id="GO:0050661">
    <property type="term" value="F:NADP binding"/>
    <property type="evidence" value="ECO:0007669"/>
    <property type="project" value="InterPro"/>
</dbReference>
<dbReference type="GO" id="GO:0055129">
    <property type="term" value="P:L-proline biosynthetic process"/>
    <property type="evidence" value="ECO:0007669"/>
    <property type="project" value="UniProtKB-UniRule"/>
</dbReference>
<dbReference type="CDD" id="cd07079">
    <property type="entry name" value="ALDH_F18-19_ProA-GPR"/>
    <property type="match status" value="1"/>
</dbReference>
<dbReference type="FunFam" id="3.40.309.10:FF:000006">
    <property type="entry name" value="Gamma-glutamyl phosphate reductase"/>
    <property type="match status" value="1"/>
</dbReference>
<dbReference type="Gene3D" id="3.40.605.10">
    <property type="entry name" value="Aldehyde Dehydrogenase, Chain A, domain 1"/>
    <property type="match status" value="1"/>
</dbReference>
<dbReference type="Gene3D" id="3.40.309.10">
    <property type="entry name" value="Aldehyde Dehydrogenase, Chain A, domain 2"/>
    <property type="match status" value="1"/>
</dbReference>
<dbReference type="HAMAP" id="MF_00412">
    <property type="entry name" value="ProA"/>
    <property type="match status" value="1"/>
</dbReference>
<dbReference type="InterPro" id="IPR016161">
    <property type="entry name" value="Ald_DH/histidinol_DH"/>
</dbReference>
<dbReference type="InterPro" id="IPR016163">
    <property type="entry name" value="Ald_DH_C"/>
</dbReference>
<dbReference type="InterPro" id="IPR016162">
    <property type="entry name" value="Ald_DH_N"/>
</dbReference>
<dbReference type="InterPro" id="IPR015590">
    <property type="entry name" value="Aldehyde_DH_dom"/>
</dbReference>
<dbReference type="InterPro" id="IPR020593">
    <property type="entry name" value="G-glutamylP_reductase_CS"/>
</dbReference>
<dbReference type="InterPro" id="IPR012134">
    <property type="entry name" value="Glu-5-SA_DH"/>
</dbReference>
<dbReference type="InterPro" id="IPR000965">
    <property type="entry name" value="GPR_dom"/>
</dbReference>
<dbReference type="NCBIfam" id="NF001221">
    <property type="entry name" value="PRK00197.1"/>
    <property type="match status" value="1"/>
</dbReference>
<dbReference type="NCBIfam" id="TIGR00407">
    <property type="entry name" value="proA"/>
    <property type="match status" value="1"/>
</dbReference>
<dbReference type="PANTHER" id="PTHR11063:SF8">
    <property type="entry name" value="DELTA-1-PYRROLINE-5-CARBOXYLATE SYNTHASE"/>
    <property type="match status" value="1"/>
</dbReference>
<dbReference type="PANTHER" id="PTHR11063">
    <property type="entry name" value="GLUTAMATE SEMIALDEHYDE DEHYDROGENASE"/>
    <property type="match status" value="1"/>
</dbReference>
<dbReference type="Pfam" id="PF00171">
    <property type="entry name" value="Aldedh"/>
    <property type="match status" value="1"/>
</dbReference>
<dbReference type="PIRSF" id="PIRSF000151">
    <property type="entry name" value="GPR"/>
    <property type="match status" value="1"/>
</dbReference>
<dbReference type="SUPFAM" id="SSF53720">
    <property type="entry name" value="ALDH-like"/>
    <property type="match status" value="1"/>
</dbReference>
<dbReference type="PROSITE" id="PS01223">
    <property type="entry name" value="PROA"/>
    <property type="match status" value="1"/>
</dbReference>
<accession>P54902</accession>
<feature type="chain" id="PRO_0000189801" description="Gamma-glutamyl phosphate reductase 1">
    <location>
        <begin position="1"/>
        <end position="433"/>
    </location>
</feature>
<comment type="function">
    <text evidence="1">Catalyzes the NADPH-dependent reduction of L-glutamate 5-phosphate into L-glutamate 5-semialdehyde and phosphate. The product spontaneously undergoes cyclization to form 1-pyrroline-5-carboxylate.</text>
</comment>
<comment type="catalytic activity">
    <reaction evidence="1">
        <text>L-glutamate 5-semialdehyde + phosphate + NADP(+) = L-glutamyl 5-phosphate + NADPH + H(+)</text>
        <dbReference type="Rhea" id="RHEA:19541"/>
        <dbReference type="ChEBI" id="CHEBI:15378"/>
        <dbReference type="ChEBI" id="CHEBI:43474"/>
        <dbReference type="ChEBI" id="CHEBI:57783"/>
        <dbReference type="ChEBI" id="CHEBI:58066"/>
        <dbReference type="ChEBI" id="CHEBI:58274"/>
        <dbReference type="ChEBI" id="CHEBI:58349"/>
        <dbReference type="EC" id="1.2.1.41"/>
    </reaction>
</comment>
<comment type="pathway">
    <text evidence="1">Amino-acid biosynthesis; L-proline biosynthesis; L-glutamate 5-semialdehyde from L-glutamate: step 2/2.</text>
</comment>
<comment type="subcellular location">
    <subcellularLocation>
        <location evidence="1">Cytoplasm</location>
    </subcellularLocation>
</comment>
<comment type="similarity">
    <text evidence="1">Belongs to the gamma-glutamyl phosphate reductase family.</text>
</comment>
<protein>
    <recommendedName>
        <fullName evidence="1">Gamma-glutamyl phosphate reductase 1</fullName>
        <shortName evidence="1">GPR 1</shortName>
        <ecNumber evidence="1">1.2.1.41</ecNumber>
    </recommendedName>
    <alternativeName>
        <fullName evidence="1">Glutamate-5-semialdehyde dehydrogenase 1</fullName>
    </alternativeName>
    <alternativeName>
        <fullName evidence="1">Glutamyl-gamma-semialdehyde dehydrogenase 1</fullName>
        <shortName evidence="1">GSA dehydrogenase 1</shortName>
    </alternativeName>
</protein>